<organism>
    <name type="scientific">Photorhabdus laumondii subsp. laumondii (strain DSM 15139 / CIP 105565 / TT01)</name>
    <name type="common">Photorhabdus luminescens subsp. laumondii</name>
    <dbReference type="NCBI Taxonomy" id="243265"/>
    <lineage>
        <taxon>Bacteria</taxon>
        <taxon>Pseudomonadati</taxon>
        <taxon>Pseudomonadota</taxon>
        <taxon>Gammaproteobacteria</taxon>
        <taxon>Enterobacterales</taxon>
        <taxon>Morganellaceae</taxon>
        <taxon>Photorhabdus</taxon>
    </lineage>
</organism>
<sequence length="274" mass="30356">MQFSKMHGLGNDFMVVDAVTQNVYFSPELICRLADRHTGVGFDQLLIVEAPYDPDMDFHYRIFNADGSEVAQCGNGARCFARFVRLKGLINKRDIKVSTQSGRMVLSITNDDQVCVNMGEPEFEPHHVPFRALRAEKTYILRVAERTVLCGVVSMGNPHCVIQVPDVETAEVDILGPALESHERFPERANIGFMQILNRGHIRLRVYERGVGETQACGSGACAAVAVGIQQQLLDNHVRVDLPGGSLFICWDGPGKPLYMTGPAMHVYDGTIHL</sequence>
<evidence type="ECO:0000255" key="1">
    <source>
        <dbReference type="HAMAP-Rule" id="MF_00197"/>
    </source>
</evidence>
<feature type="chain" id="PRO_1000011924" description="Diaminopimelate epimerase">
    <location>
        <begin position="1"/>
        <end position="274"/>
    </location>
</feature>
<feature type="active site" description="Proton donor" evidence="1">
    <location>
        <position position="73"/>
    </location>
</feature>
<feature type="active site" description="Proton acceptor" evidence="1">
    <location>
        <position position="217"/>
    </location>
</feature>
<feature type="binding site" evidence="1">
    <location>
        <position position="11"/>
    </location>
    <ligand>
        <name>substrate</name>
    </ligand>
</feature>
<feature type="binding site" evidence="1">
    <location>
        <position position="44"/>
    </location>
    <ligand>
        <name>substrate</name>
    </ligand>
</feature>
<feature type="binding site" evidence="1">
    <location>
        <position position="64"/>
    </location>
    <ligand>
        <name>substrate</name>
    </ligand>
</feature>
<feature type="binding site" evidence="1">
    <location>
        <begin position="74"/>
        <end position="75"/>
    </location>
    <ligand>
        <name>substrate</name>
    </ligand>
</feature>
<feature type="binding site" evidence="1">
    <location>
        <position position="157"/>
    </location>
    <ligand>
        <name>substrate</name>
    </ligand>
</feature>
<feature type="binding site" evidence="1">
    <location>
        <position position="190"/>
    </location>
    <ligand>
        <name>substrate</name>
    </ligand>
</feature>
<feature type="binding site" evidence="1">
    <location>
        <begin position="208"/>
        <end position="209"/>
    </location>
    <ligand>
        <name>substrate</name>
    </ligand>
</feature>
<feature type="binding site" evidence="1">
    <location>
        <begin position="218"/>
        <end position="219"/>
    </location>
    <ligand>
        <name>substrate</name>
    </ligand>
</feature>
<feature type="site" description="Could be important to modulate the pK values of the two catalytic cysteine residues" evidence="1">
    <location>
        <position position="159"/>
    </location>
</feature>
<feature type="site" description="Could be important to modulate the pK values of the two catalytic cysteine residues" evidence="1">
    <location>
        <position position="208"/>
    </location>
</feature>
<feature type="site" description="Important for dimerization" evidence="1">
    <location>
        <position position="268"/>
    </location>
</feature>
<proteinExistence type="inferred from homology"/>
<accession>Q7MYN5</accession>
<keyword id="KW-0028">Amino-acid biosynthesis</keyword>
<keyword id="KW-0963">Cytoplasm</keyword>
<keyword id="KW-0413">Isomerase</keyword>
<keyword id="KW-0457">Lysine biosynthesis</keyword>
<keyword id="KW-1185">Reference proteome</keyword>
<reference key="1">
    <citation type="journal article" date="2003" name="Nat. Biotechnol.">
        <title>The genome sequence of the entomopathogenic bacterium Photorhabdus luminescens.</title>
        <authorList>
            <person name="Duchaud E."/>
            <person name="Rusniok C."/>
            <person name="Frangeul L."/>
            <person name="Buchrieser C."/>
            <person name="Givaudan A."/>
            <person name="Taourit S."/>
            <person name="Bocs S."/>
            <person name="Boursaux-Eude C."/>
            <person name="Chandler M."/>
            <person name="Charles J.-F."/>
            <person name="Dassa E."/>
            <person name="Derose R."/>
            <person name="Derzelle S."/>
            <person name="Freyssinet G."/>
            <person name="Gaudriault S."/>
            <person name="Medigue C."/>
            <person name="Lanois A."/>
            <person name="Powell K."/>
            <person name="Siguier P."/>
            <person name="Vincent R."/>
            <person name="Wingate V."/>
            <person name="Zouine M."/>
            <person name="Glaser P."/>
            <person name="Boemare N."/>
            <person name="Danchin A."/>
            <person name="Kunst F."/>
        </authorList>
    </citation>
    <scope>NUCLEOTIDE SEQUENCE [LARGE SCALE GENOMIC DNA]</scope>
    <source>
        <strain>DSM 15139 / CIP 105565 / TT01</strain>
    </source>
</reference>
<dbReference type="EC" id="5.1.1.7" evidence="1"/>
<dbReference type="EMBL" id="BX571874">
    <property type="protein sequence ID" value="CAE17012.1"/>
    <property type="molecule type" value="Genomic_DNA"/>
</dbReference>
<dbReference type="RefSeq" id="WP_011148711.1">
    <property type="nucleotide sequence ID" value="NC_005126.1"/>
</dbReference>
<dbReference type="SMR" id="Q7MYN5"/>
<dbReference type="STRING" id="243265.plu4640"/>
<dbReference type="GeneID" id="48850853"/>
<dbReference type="KEGG" id="plu:plu4640"/>
<dbReference type="eggNOG" id="COG0253">
    <property type="taxonomic scope" value="Bacteria"/>
</dbReference>
<dbReference type="HOGENOM" id="CLU_053306_1_1_6"/>
<dbReference type="OrthoDB" id="9805408at2"/>
<dbReference type="UniPathway" id="UPA00034">
    <property type="reaction ID" value="UER00025"/>
</dbReference>
<dbReference type="Proteomes" id="UP000002514">
    <property type="component" value="Chromosome"/>
</dbReference>
<dbReference type="GO" id="GO:0005829">
    <property type="term" value="C:cytosol"/>
    <property type="evidence" value="ECO:0007669"/>
    <property type="project" value="TreeGrafter"/>
</dbReference>
<dbReference type="GO" id="GO:0008837">
    <property type="term" value="F:diaminopimelate epimerase activity"/>
    <property type="evidence" value="ECO:0007669"/>
    <property type="project" value="UniProtKB-UniRule"/>
</dbReference>
<dbReference type="GO" id="GO:0009089">
    <property type="term" value="P:lysine biosynthetic process via diaminopimelate"/>
    <property type="evidence" value="ECO:0007669"/>
    <property type="project" value="UniProtKB-UniRule"/>
</dbReference>
<dbReference type="FunFam" id="3.10.310.10:FF:000001">
    <property type="entry name" value="Diaminopimelate epimerase"/>
    <property type="match status" value="1"/>
</dbReference>
<dbReference type="FunFam" id="3.10.310.10:FF:000002">
    <property type="entry name" value="Diaminopimelate epimerase"/>
    <property type="match status" value="1"/>
</dbReference>
<dbReference type="Gene3D" id="3.10.310.10">
    <property type="entry name" value="Diaminopimelate Epimerase, Chain A, domain 1"/>
    <property type="match status" value="2"/>
</dbReference>
<dbReference type="HAMAP" id="MF_00197">
    <property type="entry name" value="DAP_epimerase"/>
    <property type="match status" value="1"/>
</dbReference>
<dbReference type="InterPro" id="IPR018510">
    <property type="entry name" value="DAP_epimerase_AS"/>
</dbReference>
<dbReference type="InterPro" id="IPR001653">
    <property type="entry name" value="DAP_epimerase_DapF"/>
</dbReference>
<dbReference type="NCBIfam" id="TIGR00652">
    <property type="entry name" value="DapF"/>
    <property type="match status" value="1"/>
</dbReference>
<dbReference type="PANTHER" id="PTHR31689:SF0">
    <property type="entry name" value="DIAMINOPIMELATE EPIMERASE"/>
    <property type="match status" value="1"/>
</dbReference>
<dbReference type="PANTHER" id="PTHR31689">
    <property type="entry name" value="DIAMINOPIMELATE EPIMERASE, CHLOROPLASTIC"/>
    <property type="match status" value="1"/>
</dbReference>
<dbReference type="Pfam" id="PF01678">
    <property type="entry name" value="DAP_epimerase"/>
    <property type="match status" value="2"/>
</dbReference>
<dbReference type="SUPFAM" id="SSF54506">
    <property type="entry name" value="Diaminopimelate epimerase-like"/>
    <property type="match status" value="2"/>
</dbReference>
<dbReference type="PROSITE" id="PS01326">
    <property type="entry name" value="DAP_EPIMERASE"/>
    <property type="match status" value="1"/>
</dbReference>
<gene>
    <name evidence="1" type="primary">dapF</name>
    <name type="ordered locus">plu4640</name>
</gene>
<comment type="function">
    <text evidence="1">Catalyzes the stereoinversion of LL-2,6-diaminopimelate (L,L-DAP) to meso-diaminopimelate (meso-DAP), a precursor of L-lysine and an essential component of the bacterial peptidoglycan.</text>
</comment>
<comment type="catalytic activity">
    <reaction evidence="1">
        <text>(2S,6S)-2,6-diaminopimelate = meso-2,6-diaminopimelate</text>
        <dbReference type="Rhea" id="RHEA:15393"/>
        <dbReference type="ChEBI" id="CHEBI:57609"/>
        <dbReference type="ChEBI" id="CHEBI:57791"/>
        <dbReference type="EC" id="5.1.1.7"/>
    </reaction>
</comment>
<comment type="pathway">
    <text evidence="1">Amino-acid biosynthesis; L-lysine biosynthesis via DAP pathway; DL-2,6-diaminopimelate from LL-2,6-diaminopimelate: step 1/1.</text>
</comment>
<comment type="subunit">
    <text evidence="1">Homodimer.</text>
</comment>
<comment type="subcellular location">
    <subcellularLocation>
        <location evidence="1">Cytoplasm</location>
    </subcellularLocation>
</comment>
<comment type="similarity">
    <text evidence="1">Belongs to the diaminopimelate epimerase family.</text>
</comment>
<protein>
    <recommendedName>
        <fullName evidence="1">Diaminopimelate epimerase</fullName>
        <shortName evidence="1">DAP epimerase</shortName>
        <ecNumber evidence="1">5.1.1.7</ecNumber>
    </recommendedName>
    <alternativeName>
        <fullName evidence="1">PLP-independent amino acid racemase</fullName>
    </alternativeName>
</protein>
<name>DAPF_PHOLL</name>